<comment type="function">
    <text evidence="3">Translocates phospholipids and drugs across the membrane. Catalyzes the flop of phospholipids from the cytoplasmic to the exoplasmic leaflet of the apical membrane. Participates mainly to the flop of phosphatidylcholine, phosphatidylethanolamine, beta-D-glucosylceramides and sphingomyelins. Energy-dependent efflux pump responsible for decreased drug accumulation in multidrug-resistant cells.</text>
</comment>
<comment type="catalytic activity">
    <reaction evidence="3">
        <text>ATP + H2O + xenobioticSide 1 = ADP + phosphate + xenobioticSide 2.</text>
        <dbReference type="EC" id="7.6.2.2"/>
    </reaction>
</comment>
<comment type="catalytic activity">
    <reaction evidence="3">
        <text>ATP + H2O + phospholipidSide 1 = ADP + phosphate + phospholipidSide 2.</text>
        <dbReference type="EC" id="7.6.2.1"/>
    </reaction>
</comment>
<comment type="catalytic activity">
    <reaction evidence="3">
        <text>a 1,2-diacyl-sn-glycero-3-phosphoethanolamine(in) + ATP + H2O = a 1,2-diacyl-sn-glycero-3-phosphoethanolamine(out) + ADP + phosphate + H(+)</text>
        <dbReference type="Rhea" id="RHEA:36439"/>
        <dbReference type="ChEBI" id="CHEBI:15377"/>
        <dbReference type="ChEBI" id="CHEBI:15378"/>
        <dbReference type="ChEBI" id="CHEBI:30616"/>
        <dbReference type="ChEBI" id="CHEBI:43474"/>
        <dbReference type="ChEBI" id="CHEBI:64612"/>
        <dbReference type="ChEBI" id="CHEBI:456216"/>
    </reaction>
</comment>
<comment type="catalytic activity">
    <reaction evidence="3">
        <text>a 1,2-diacyl-sn-glycero-3-phosphocholine(out) + ATP + H2O = a 1,2-diacyl-sn-glycero-3-phosphocholine(in) + ADP + phosphate + H(+)</text>
        <dbReference type="Rhea" id="RHEA:38583"/>
        <dbReference type="ChEBI" id="CHEBI:15377"/>
        <dbReference type="ChEBI" id="CHEBI:15378"/>
        <dbReference type="ChEBI" id="CHEBI:30616"/>
        <dbReference type="ChEBI" id="CHEBI:43474"/>
        <dbReference type="ChEBI" id="CHEBI:57643"/>
        <dbReference type="ChEBI" id="CHEBI:456216"/>
    </reaction>
</comment>
<comment type="catalytic activity">
    <reaction evidence="3">
        <text>a beta-D-glucosyl-(1&lt;-&gt;1')-N-acylsphing-4-enine(in) + ATP + H2O = a beta-D-glucosyl-(1&lt;-&gt;1')-N-acylsphing-4-enine(out) + ADP + phosphate + H(+)</text>
        <dbReference type="Rhea" id="RHEA:38943"/>
        <dbReference type="ChEBI" id="CHEBI:15377"/>
        <dbReference type="ChEBI" id="CHEBI:15378"/>
        <dbReference type="ChEBI" id="CHEBI:22801"/>
        <dbReference type="ChEBI" id="CHEBI:30616"/>
        <dbReference type="ChEBI" id="CHEBI:43474"/>
        <dbReference type="ChEBI" id="CHEBI:456216"/>
    </reaction>
</comment>
<comment type="catalytic activity">
    <reaction evidence="3">
        <text>a sphingomyelin(in) + ATP + H2O = a sphingomyelin(out) + ADP + phosphate + H(+)</text>
        <dbReference type="Rhea" id="RHEA:38903"/>
        <dbReference type="ChEBI" id="CHEBI:15377"/>
        <dbReference type="ChEBI" id="CHEBI:15378"/>
        <dbReference type="ChEBI" id="CHEBI:17636"/>
        <dbReference type="ChEBI" id="CHEBI:30616"/>
        <dbReference type="ChEBI" id="CHEBI:43474"/>
        <dbReference type="ChEBI" id="CHEBI:456216"/>
    </reaction>
</comment>
<comment type="activity regulation">
    <text evidence="3">Translocase activity is inhibited by verapamil and is sensitive to energy depletion. C1orf115 regulates drug efflux through modulation of ABCB1 localization and activity.</text>
</comment>
<comment type="subunit">
    <text evidence="3">Interacts with PSMB5. Finds in a complex with ABCB1, TFPI2 and PPP2R3C; leading to the dephosphorylation of ABCB1.</text>
</comment>
<comment type="subcellular location">
    <subcellularLocation>
        <location evidence="3">Cell membrane</location>
        <topology evidence="6">Multi-pass membrane protein</topology>
    </subcellularLocation>
    <subcellularLocation>
        <location evidence="3">Apical cell membrane</location>
    </subcellularLocation>
    <subcellularLocation>
        <location evidence="3">Cytoplasm</location>
    </subcellularLocation>
    <text evidence="3">ABCB1 localization is influenced by C1orf115 expression levels (plasma membrane versus cytoplasm).</text>
</comment>
<comment type="similarity">
    <text evidence="8">Belongs to the ABC transporter superfamily. ABCB family. Multidrug resistance exporter (TC 3.A.1.201) subfamily.</text>
</comment>
<feature type="chain" id="PRO_0000093335" description="ATP-dependent translocase ABCB1">
    <location>
        <begin position="1"/>
        <end position="1277"/>
    </location>
</feature>
<feature type="topological domain" description="Cytoplasmic" evidence="1">
    <location>
        <begin position="1"/>
        <end position="42"/>
    </location>
</feature>
<feature type="transmembrane region" description="Helical" evidence="6">
    <location>
        <begin position="43"/>
        <end position="65"/>
    </location>
</feature>
<feature type="topological domain" description="Extracellular" evidence="1">
    <location>
        <begin position="66"/>
        <end position="115"/>
    </location>
</feature>
<feature type="transmembrane region" description="Helical" evidence="6">
    <location>
        <begin position="116"/>
        <end position="136"/>
    </location>
</feature>
<feature type="topological domain" description="Cytoplasmic" evidence="1">
    <location>
        <begin position="137"/>
        <end position="185"/>
    </location>
</feature>
<feature type="transmembrane region" description="Helical" evidence="6">
    <location>
        <begin position="186"/>
        <end position="207"/>
    </location>
</feature>
<feature type="topological domain" description="Extracellular" evidence="1">
    <location>
        <begin position="208"/>
        <end position="214"/>
    </location>
</feature>
<feature type="transmembrane region" description="Helical" evidence="6">
    <location>
        <begin position="215"/>
        <end position="235"/>
    </location>
</feature>
<feature type="topological domain" description="Cytoplasmic" evidence="1">
    <location>
        <begin position="236"/>
        <end position="293"/>
    </location>
</feature>
<feature type="transmembrane region" description="Helical" evidence="6">
    <location>
        <begin position="294"/>
        <end position="315"/>
    </location>
</feature>
<feature type="topological domain" description="Extracellular" evidence="1">
    <location>
        <begin position="316"/>
        <end position="329"/>
    </location>
</feature>
<feature type="transmembrane region" description="Helical" evidence="6">
    <location>
        <begin position="330"/>
        <end position="351"/>
    </location>
</feature>
<feature type="topological domain" description="Cytoplasmic" evidence="1">
    <location>
        <begin position="352"/>
        <end position="709"/>
    </location>
</feature>
<feature type="transmembrane region" description="Helical" evidence="6">
    <location>
        <begin position="710"/>
        <end position="730"/>
    </location>
</feature>
<feature type="topological domain" description="Extracellular" evidence="1">
    <location>
        <begin position="731"/>
        <end position="754"/>
    </location>
</feature>
<feature type="transmembrane region" description="Helical" evidence="6">
    <location>
        <begin position="755"/>
        <end position="775"/>
    </location>
</feature>
<feature type="topological domain" description="Cytoplasmic" evidence="1">
    <location>
        <begin position="776"/>
        <end position="830"/>
    </location>
</feature>
<feature type="transmembrane region" description="Helical" evidence="6">
    <location>
        <begin position="831"/>
        <end position="853"/>
    </location>
</feature>
<feature type="topological domain" description="Extracellular" evidence="1">
    <location>
        <position position="854"/>
    </location>
</feature>
<feature type="transmembrane region" description="Helical" evidence="6">
    <location>
        <begin position="855"/>
        <end position="874"/>
    </location>
</feature>
<feature type="topological domain" description="Cytoplasmic" evidence="1">
    <location>
        <begin position="875"/>
        <end position="934"/>
    </location>
</feature>
<feature type="transmembrane region" description="Helical" evidence="6">
    <location>
        <begin position="935"/>
        <end position="957"/>
    </location>
</feature>
<feature type="topological domain" description="Extracellular" evidence="1">
    <location>
        <begin position="958"/>
        <end position="973"/>
    </location>
</feature>
<feature type="transmembrane region" description="Helical" evidence="6">
    <location>
        <begin position="974"/>
        <end position="995"/>
    </location>
</feature>
<feature type="topological domain" description="Cytoplasmic" evidence="1">
    <location>
        <begin position="996"/>
        <end position="1277"/>
    </location>
</feature>
<feature type="domain" description="ABC transmembrane type-1 1" evidence="6">
    <location>
        <begin position="49"/>
        <end position="356"/>
    </location>
</feature>
<feature type="domain" description="ABC transporter 1" evidence="5">
    <location>
        <begin position="391"/>
        <end position="627"/>
    </location>
</feature>
<feature type="domain" description="ABC transmembrane type-1 2" evidence="6">
    <location>
        <begin position="709"/>
        <end position="1000"/>
    </location>
</feature>
<feature type="domain" description="ABC transporter 2" evidence="5">
    <location>
        <begin position="1035"/>
        <end position="1272"/>
    </location>
</feature>
<feature type="region of interest" description="Disordered" evidence="7">
    <location>
        <begin position="633"/>
        <end position="660"/>
    </location>
</feature>
<feature type="compositionally biased region" description="Polar residues" evidence="7">
    <location>
        <begin position="640"/>
        <end position="652"/>
    </location>
</feature>
<feature type="binding site" evidence="5">
    <location>
        <begin position="426"/>
        <end position="433"/>
    </location>
    <ligand>
        <name>ATP</name>
        <dbReference type="ChEBI" id="CHEBI:30616"/>
        <label>1</label>
    </ligand>
</feature>
<feature type="binding site" evidence="5">
    <location>
        <begin position="1070"/>
        <end position="1077"/>
    </location>
    <ligand>
        <name>ATP</name>
        <dbReference type="ChEBI" id="CHEBI:30616"/>
        <label>2</label>
    </ligand>
</feature>
<feature type="modified residue" description="Phosphotyrosine" evidence="2">
    <location>
        <position position="641"/>
    </location>
</feature>
<feature type="modified residue" description="Phosphoserine" evidence="2">
    <location>
        <position position="659"/>
    </location>
</feature>
<feature type="glycosylation site" description="N-linked (GlcNAc...) asparagine" evidence="4">
    <location>
        <position position="91"/>
    </location>
</feature>
<feature type="glycosylation site" description="N-linked (GlcNAc...) asparagine" evidence="4">
    <location>
        <position position="96"/>
    </location>
</feature>
<feature type="sequence conflict" description="In Ref. 2; CAA43415/CAA43416." evidence="8" ref="2">
    <original>V</original>
    <variation>I</variation>
    <location>
        <position position="1227"/>
    </location>
</feature>
<feature type="sequence conflict" description="In Ref. 2; CAA43415." evidence="8" ref="2">
    <original>V</original>
    <variation>VSV</variation>
    <location>
        <position position="1270"/>
    </location>
</feature>
<proteinExistence type="evidence at transcript level"/>
<accession>P43245</accession>
<accession>Q63426</accession>
<accession>Q63427</accession>
<organism>
    <name type="scientific">Rattus norvegicus</name>
    <name type="common">Rat</name>
    <dbReference type="NCBI Taxonomy" id="10116"/>
    <lineage>
        <taxon>Eukaryota</taxon>
        <taxon>Metazoa</taxon>
        <taxon>Chordata</taxon>
        <taxon>Craniata</taxon>
        <taxon>Vertebrata</taxon>
        <taxon>Euteleostomi</taxon>
        <taxon>Mammalia</taxon>
        <taxon>Eutheria</taxon>
        <taxon>Euarchontoglires</taxon>
        <taxon>Glires</taxon>
        <taxon>Rodentia</taxon>
        <taxon>Myomorpha</taxon>
        <taxon>Muroidea</taxon>
        <taxon>Muridae</taxon>
        <taxon>Murinae</taxon>
        <taxon>Rattus</taxon>
    </lineage>
</organism>
<sequence>MEFEEGLNGRADKNFSKMGKKSKKEKEKKPAVGIFGMFRYADWLDKLCMALGTLAAIIHGTLLPLLMLVFGYMTDSFTPSRDPHSDRAITNQSEINSTHTVSDTSLEEDMAMYAYYYTGIGAGVLIVAYIQVSLWCLAAGRQIHKIRQKFFHAIMNQEIGWFDVNDAGELNTRLTDDVSKINDGIGDKLGMFFQSITTFSAGFIIGFISGWKLTLVILAVSPLIGLSSAMWAKVLTSFTNKELQAYAKAGAVAEEVLAAIRTVIAFGGQKKELERYNKNLEEAKRVGIKKAITANISIGIAYLLVYASYALAFWYGTSLVLSNEYSIGQVLTVFFSILLGTFSIGHLAPNIEAFANARGAAYEIFKIIDNEPSIDSFSTKGHKPDSIMGNLEFKNVYFNYPSRSEVKILKGLNLKVKSGQTVALVGNSGCGKSTTVQLLQRLYDPIEGEVSIDGQDIRTINVRYLREIIGVVSQEPVLFATTIAENIRYGRENVTMDEIEKAVKEANAYDFIMKLPHKFDTLVGERGAQLSGGQKQRIAIARALVRNPKILLLDEATSALDTESEAVVQAALDKAREGRTTIVIAHRLSTVRNADVIAGFDGGVIVEQGNHEELMKEKGIYFKLVMTQTRGNEIEPGNNAYESQSDTGASELTSEESKSPLIRRSIRRSIHRRQDQERRLSSKEDVDEDVPMVSFWQILKLNISEWPYLVVGVLCAVINGCIQPVFAIVFSKIVGVFSRDDDHETKQRNCNLFSLLFLVMGMISFVTYFFQGFTFGKAGEILTKRLRYMVFKSMLRQDISWFDDHKNTTGSLTTRLASDASNVKGAMGSRLAVVTQNVANLGTGIILSLVLVYGWQLTLLLVVIIPLIVLGGIIEMKLLSGQALKDKKELEISGKIATEAIENFRTVVSLTREQKFETMYAQSLQIPYRNALKKAHVFGITFAFTQAMIYFSYAACFRFGAYLVARELMTFENVMLVFSAVVFGAMAAGNTSSFAPDYAKAKVSASHIIGIIEKIPEIDSYSTEGLKPNWLEGNVKFNGVKFNYPTRPNIPVLQGLSFEVKKGQTLRLVGSSGCGKSTVVQLLERFYNPMAGTVFLDGKEIKQLNVQCVRALGIVSQEPILFDCSIAENIAYGDNSRVVSHEEIVRAAREANIHQFIDSLPEKYNTRVGDKGTQLSGGQKQRIAIARALVRQPHILLLDEATSALDTESEKVVQEALDKAREGRTCVVIAHRLSTIQNADLIVVIQNGQVKEHGTHQQLLAQKGIYFSMVQAGAKRS</sequence>
<dbReference type="EC" id="7.6.2.2" evidence="3"/>
<dbReference type="EC" id="7.6.2.1" evidence="3"/>
<dbReference type="EMBL" id="M81855">
    <property type="status" value="NOT_ANNOTATED_CDS"/>
    <property type="molecule type" value="mRNA"/>
</dbReference>
<dbReference type="EMBL" id="X61103">
    <property type="protein sequence ID" value="CAA43415.1"/>
    <property type="molecule type" value="Genomic_DNA"/>
</dbReference>
<dbReference type="EMBL" id="X61104">
    <property type="protein sequence ID" value="CAA43416.1"/>
    <property type="molecule type" value="Genomic_DNA"/>
</dbReference>
<dbReference type="PIR" id="JH0502">
    <property type="entry name" value="JH0502"/>
</dbReference>
<dbReference type="SMR" id="P43245"/>
<dbReference type="FunCoup" id="P43245">
    <property type="interactions" value="43"/>
</dbReference>
<dbReference type="ChEMBL" id="CHEMBL1075229"/>
<dbReference type="GlyCosmos" id="P43245">
    <property type="glycosylation" value="2 sites, No reported glycans"/>
</dbReference>
<dbReference type="GlyGen" id="P43245">
    <property type="glycosylation" value="2 sites"/>
</dbReference>
<dbReference type="iPTMnet" id="P43245"/>
<dbReference type="PhosphoSitePlus" id="P43245"/>
<dbReference type="PaxDb" id="10116-ENSRNOP00000049952"/>
<dbReference type="AGR" id="RGD:3318"/>
<dbReference type="RGD" id="3318">
    <property type="gene designation" value="Abcb1"/>
</dbReference>
<dbReference type="eggNOG" id="KOG0055">
    <property type="taxonomic scope" value="Eukaryota"/>
</dbReference>
<dbReference type="InParanoid" id="P43245"/>
<dbReference type="PhylomeDB" id="P43245"/>
<dbReference type="Reactome" id="R-RNO-382556">
    <property type="pathway name" value="ABC-family proteins mediated transport"/>
</dbReference>
<dbReference type="Reactome" id="R-RNO-9754706">
    <property type="pathway name" value="Atorvastatin ADME"/>
</dbReference>
<dbReference type="Reactome" id="R-RNO-9757110">
    <property type="pathway name" value="Prednisone ADME"/>
</dbReference>
<dbReference type="PRO" id="PR:P43245"/>
<dbReference type="Proteomes" id="UP000002494">
    <property type="component" value="Unplaced"/>
</dbReference>
<dbReference type="GO" id="GO:0016324">
    <property type="term" value="C:apical plasma membrane"/>
    <property type="evidence" value="ECO:0000314"/>
    <property type="project" value="RGD"/>
</dbReference>
<dbReference type="GO" id="GO:0098591">
    <property type="term" value="C:external side of apical plasma membrane"/>
    <property type="evidence" value="ECO:0000314"/>
    <property type="project" value="ARUK-UCL"/>
</dbReference>
<dbReference type="GO" id="GO:0000139">
    <property type="term" value="C:Golgi membrane"/>
    <property type="evidence" value="ECO:0000314"/>
    <property type="project" value="RGD"/>
</dbReference>
<dbReference type="GO" id="GO:0046581">
    <property type="term" value="C:intercellular canaliculus"/>
    <property type="evidence" value="ECO:0000266"/>
    <property type="project" value="RGD"/>
</dbReference>
<dbReference type="GO" id="GO:0008559">
    <property type="term" value="F:ABC-type xenobiotic transporter activity"/>
    <property type="evidence" value="ECO:0007669"/>
    <property type="project" value="UniProtKB-EC"/>
</dbReference>
<dbReference type="GO" id="GO:0005524">
    <property type="term" value="F:ATP binding"/>
    <property type="evidence" value="ECO:0007669"/>
    <property type="project" value="UniProtKB-KW"/>
</dbReference>
<dbReference type="GO" id="GO:0016887">
    <property type="term" value="F:ATP hydrolysis activity"/>
    <property type="evidence" value="ECO:0007669"/>
    <property type="project" value="InterPro"/>
</dbReference>
<dbReference type="GO" id="GO:0042626">
    <property type="term" value="F:ATPase-coupled transmembrane transporter activity"/>
    <property type="evidence" value="ECO:0000318"/>
    <property type="project" value="GO_Central"/>
</dbReference>
<dbReference type="GO" id="GO:0140328">
    <property type="term" value="F:floppase activity"/>
    <property type="evidence" value="ECO:0000250"/>
    <property type="project" value="UniProtKB"/>
</dbReference>
<dbReference type="GO" id="GO:0090554">
    <property type="term" value="F:phosphatidylcholine floppase activity"/>
    <property type="evidence" value="ECO:0000318"/>
    <property type="project" value="GO_Central"/>
</dbReference>
<dbReference type="GO" id="GO:0042910">
    <property type="term" value="F:xenobiotic transmembrane transporter activity"/>
    <property type="evidence" value="ECO:0000318"/>
    <property type="project" value="GO_Central"/>
</dbReference>
<dbReference type="GO" id="GO:0071217">
    <property type="term" value="P:cellular response to external biotic stimulus"/>
    <property type="evidence" value="ECO:0000270"/>
    <property type="project" value="RGD"/>
</dbReference>
<dbReference type="GO" id="GO:0071356">
    <property type="term" value="P:cellular response to tumor necrosis factor"/>
    <property type="evidence" value="ECO:0000270"/>
    <property type="project" value="RGD"/>
</dbReference>
<dbReference type="GO" id="GO:0099040">
    <property type="term" value="P:ceramide translocation"/>
    <property type="evidence" value="ECO:0000318"/>
    <property type="project" value="GO_Central"/>
</dbReference>
<dbReference type="GO" id="GO:0014045">
    <property type="term" value="P:establishment of endothelial blood-brain barrier"/>
    <property type="evidence" value="ECO:0000315"/>
    <property type="project" value="RGD"/>
</dbReference>
<dbReference type="GO" id="GO:0007595">
    <property type="term" value="P:lactation"/>
    <property type="evidence" value="ECO:0000270"/>
    <property type="project" value="RGD"/>
</dbReference>
<dbReference type="GO" id="GO:0045332">
    <property type="term" value="P:phospholipid translocation"/>
    <property type="evidence" value="ECO:0000318"/>
    <property type="project" value="GO_Central"/>
</dbReference>
<dbReference type="GO" id="GO:0001890">
    <property type="term" value="P:placenta development"/>
    <property type="evidence" value="ECO:0000270"/>
    <property type="project" value="RGD"/>
</dbReference>
<dbReference type="GO" id="GO:0097327">
    <property type="term" value="P:response to antineoplastic agent"/>
    <property type="evidence" value="ECO:0000270"/>
    <property type="project" value="RGD"/>
</dbReference>
<dbReference type="GO" id="GO:0046685">
    <property type="term" value="P:response to arsenic-containing substance"/>
    <property type="evidence" value="ECO:0000270"/>
    <property type="project" value="RGD"/>
</dbReference>
<dbReference type="GO" id="GO:0033595">
    <property type="term" value="P:response to genistein"/>
    <property type="evidence" value="ECO:0000270"/>
    <property type="project" value="RGD"/>
</dbReference>
<dbReference type="GO" id="GO:1903416">
    <property type="term" value="P:response to glycoside"/>
    <property type="evidence" value="ECO:0000270"/>
    <property type="project" value="RGD"/>
</dbReference>
<dbReference type="GO" id="GO:0001666">
    <property type="term" value="P:response to hypoxia"/>
    <property type="evidence" value="ECO:0000270"/>
    <property type="project" value="RGD"/>
</dbReference>
<dbReference type="GO" id="GO:0010212">
    <property type="term" value="P:response to ionizing radiation"/>
    <property type="evidence" value="ECO:0000270"/>
    <property type="project" value="RGD"/>
</dbReference>
<dbReference type="GO" id="GO:0032496">
    <property type="term" value="P:response to lipopolysaccharide"/>
    <property type="evidence" value="ECO:0000270"/>
    <property type="project" value="RGD"/>
</dbReference>
<dbReference type="GO" id="GO:0010046">
    <property type="term" value="P:response to mycotoxin"/>
    <property type="evidence" value="ECO:0000270"/>
    <property type="project" value="RGD"/>
</dbReference>
<dbReference type="GO" id="GO:0048545">
    <property type="term" value="P:response to steroid hormone"/>
    <property type="evidence" value="ECO:0000270"/>
    <property type="project" value="RGD"/>
</dbReference>
<dbReference type="GO" id="GO:0033189">
    <property type="term" value="P:response to vitamin A"/>
    <property type="evidence" value="ECO:0000270"/>
    <property type="project" value="RGD"/>
</dbReference>
<dbReference type="GO" id="GO:0009410">
    <property type="term" value="P:response to xenobiotic stimulus"/>
    <property type="evidence" value="ECO:0000315"/>
    <property type="project" value="RGD"/>
</dbReference>
<dbReference type="GO" id="GO:0061843">
    <property type="term" value="P:Sertoli cell barrier remodeling"/>
    <property type="evidence" value="ECO:0000315"/>
    <property type="project" value="RGD"/>
</dbReference>
<dbReference type="CDD" id="cd18558">
    <property type="entry name" value="ABC_6TM_Pgp_ABCB1"/>
    <property type="match status" value="1"/>
</dbReference>
<dbReference type="CDD" id="cd18578">
    <property type="entry name" value="ABC_6TM_Pgp_ABCB1_D2_like"/>
    <property type="match status" value="1"/>
</dbReference>
<dbReference type="CDD" id="cd03249">
    <property type="entry name" value="ABC_MTABC3_MDL1_MDL2"/>
    <property type="match status" value="2"/>
</dbReference>
<dbReference type="FunFam" id="1.20.1560.10:FF:000018">
    <property type="entry name" value="ATP-binding cassette subfamily B member 11"/>
    <property type="match status" value="1"/>
</dbReference>
<dbReference type="FunFam" id="1.20.1560.10:FF:000043">
    <property type="entry name" value="Multidrug resistance protein 1A"/>
    <property type="match status" value="1"/>
</dbReference>
<dbReference type="FunFam" id="3.40.50.300:FF:000479">
    <property type="entry name" value="Multidrug resistance protein 1A"/>
    <property type="match status" value="2"/>
</dbReference>
<dbReference type="Gene3D" id="1.20.1560.10">
    <property type="entry name" value="ABC transporter type 1, transmembrane domain"/>
    <property type="match status" value="1"/>
</dbReference>
<dbReference type="Gene3D" id="3.40.50.300">
    <property type="entry name" value="P-loop containing nucleotide triphosphate hydrolases"/>
    <property type="match status" value="2"/>
</dbReference>
<dbReference type="InterPro" id="IPR003593">
    <property type="entry name" value="AAA+_ATPase"/>
</dbReference>
<dbReference type="InterPro" id="IPR011527">
    <property type="entry name" value="ABC1_TM_dom"/>
</dbReference>
<dbReference type="InterPro" id="IPR036640">
    <property type="entry name" value="ABC1_TM_sf"/>
</dbReference>
<dbReference type="InterPro" id="IPR003439">
    <property type="entry name" value="ABC_transporter-like_ATP-bd"/>
</dbReference>
<dbReference type="InterPro" id="IPR017871">
    <property type="entry name" value="ABC_transporter-like_CS"/>
</dbReference>
<dbReference type="InterPro" id="IPR027417">
    <property type="entry name" value="P-loop_NTPase"/>
</dbReference>
<dbReference type="InterPro" id="IPR039421">
    <property type="entry name" value="Type_1_exporter"/>
</dbReference>
<dbReference type="PANTHER" id="PTHR43394:SF28">
    <property type="entry name" value="ATP-BINDING CASSETTE SUBFAMILY B MEMBER 1"/>
    <property type="match status" value="1"/>
</dbReference>
<dbReference type="PANTHER" id="PTHR43394">
    <property type="entry name" value="ATP-DEPENDENT PERMEASE MDL1, MITOCHONDRIAL"/>
    <property type="match status" value="1"/>
</dbReference>
<dbReference type="Pfam" id="PF00664">
    <property type="entry name" value="ABC_membrane"/>
    <property type="match status" value="2"/>
</dbReference>
<dbReference type="Pfam" id="PF00005">
    <property type="entry name" value="ABC_tran"/>
    <property type="match status" value="2"/>
</dbReference>
<dbReference type="SMART" id="SM00382">
    <property type="entry name" value="AAA"/>
    <property type="match status" value="2"/>
</dbReference>
<dbReference type="SUPFAM" id="SSF90123">
    <property type="entry name" value="ABC transporter transmembrane region"/>
    <property type="match status" value="2"/>
</dbReference>
<dbReference type="SUPFAM" id="SSF52540">
    <property type="entry name" value="P-loop containing nucleoside triphosphate hydrolases"/>
    <property type="match status" value="2"/>
</dbReference>
<dbReference type="PROSITE" id="PS50929">
    <property type="entry name" value="ABC_TM1F"/>
    <property type="match status" value="2"/>
</dbReference>
<dbReference type="PROSITE" id="PS00211">
    <property type="entry name" value="ABC_TRANSPORTER_1"/>
    <property type="match status" value="2"/>
</dbReference>
<dbReference type="PROSITE" id="PS50893">
    <property type="entry name" value="ABC_TRANSPORTER_2"/>
    <property type="match status" value="2"/>
</dbReference>
<protein>
    <recommendedName>
        <fullName evidence="3">ATP-dependent translocase ABCB1</fullName>
    </recommendedName>
    <alternativeName>
        <fullName>ATP-binding cassette sub-family B member 1</fullName>
    </alternativeName>
    <alternativeName>
        <fullName>Multidrug resistance protein 1</fullName>
        <ecNumber evidence="3">7.6.2.2</ecNumber>
    </alternativeName>
    <alternativeName>
        <fullName>P-glycoprotein 1</fullName>
    </alternativeName>
    <alternativeName>
        <fullName evidence="8">Phospholipid transporter ABCB1</fullName>
        <ecNumber evidence="3">7.6.2.1</ecNumber>
    </alternativeName>
    <cdAntigenName>CD243</cdAntigenName>
</protein>
<gene>
    <name evidence="9" type="primary">Abcb1</name>
    <name type="synonym">Mdr1</name>
    <name type="synonym">Mdr1b</name>
    <name type="synonym">Pgy1</name>
</gene>
<evidence type="ECO:0000250" key="1"/>
<evidence type="ECO:0000250" key="2">
    <source>
        <dbReference type="UniProtKB" id="P06795"/>
    </source>
</evidence>
<evidence type="ECO:0000250" key="3">
    <source>
        <dbReference type="UniProtKB" id="P08183"/>
    </source>
</evidence>
<evidence type="ECO:0000255" key="4"/>
<evidence type="ECO:0000255" key="5">
    <source>
        <dbReference type="PROSITE-ProRule" id="PRU00434"/>
    </source>
</evidence>
<evidence type="ECO:0000255" key="6">
    <source>
        <dbReference type="PROSITE-ProRule" id="PRU00441"/>
    </source>
</evidence>
<evidence type="ECO:0000256" key="7">
    <source>
        <dbReference type="SAM" id="MobiDB-lite"/>
    </source>
</evidence>
<evidence type="ECO:0000305" key="8"/>
<evidence type="ECO:0000312" key="9">
    <source>
        <dbReference type="RGD" id="3318"/>
    </source>
</evidence>
<keyword id="KW-0067">ATP-binding</keyword>
<keyword id="KW-1003">Cell membrane</keyword>
<keyword id="KW-0963">Cytoplasm</keyword>
<keyword id="KW-0325">Glycoprotein</keyword>
<keyword id="KW-0445">Lipid transport</keyword>
<keyword id="KW-0472">Membrane</keyword>
<keyword id="KW-0547">Nucleotide-binding</keyword>
<keyword id="KW-0597">Phosphoprotein</keyword>
<keyword id="KW-1185">Reference proteome</keyword>
<keyword id="KW-0677">Repeat</keyword>
<keyword id="KW-1278">Translocase</keyword>
<keyword id="KW-0812">Transmembrane</keyword>
<keyword id="KW-1133">Transmembrane helix</keyword>
<keyword id="KW-0813">Transport</keyword>
<name>MDR1_RAT</name>
<reference key="1">
    <citation type="journal article" date="1991" name="Gene">
        <title>Cloning and characterization of a member of the rat multidrug resistance (mdr) gene family.</title>
        <authorList>
            <person name="Silverman J.A."/>
            <person name="Raunio H."/>
            <person name="Gant T.W."/>
            <person name="Thorgeirsson S.S."/>
        </authorList>
    </citation>
    <scope>NUCLEOTIDE SEQUENCE [MRNA]</scope>
</reference>
<reference key="2">
    <citation type="journal article" date="1992" name="Biochim. Biophys. Acta">
        <title>Identification of distinct P-glycoprotein gene sequences in rat.</title>
        <authorList>
            <person name="Deuchars K.L."/>
            <person name="Duthie M."/>
            <person name="Ling V."/>
        </authorList>
    </citation>
    <scope>NUCLEOTIDE SEQUENCE [GENOMIC DNA] OF 1212-1277</scope>
    <source>
        <strain>Sprague-Dawley</strain>
        <tissue>Liver</tissue>
    </source>
</reference>